<feature type="chain" id="PRO_1000095092" description="Elongation factor Tu">
    <location>
        <begin position="1"/>
        <end position="398"/>
    </location>
</feature>
<feature type="domain" description="tr-type G">
    <location>
        <begin position="10"/>
        <end position="207"/>
    </location>
</feature>
<feature type="region of interest" description="G1" evidence="1">
    <location>
        <begin position="19"/>
        <end position="26"/>
    </location>
</feature>
<feature type="region of interest" description="G2" evidence="1">
    <location>
        <begin position="63"/>
        <end position="67"/>
    </location>
</feature>
<feature type="region of interest" description="G3" evidence="1">
    <location>
        <begin position="84"/>
        <end position="87"/>
    </location>
</feature>
<feature type="region of interest" description="G4" evidence="1">
    <location>
        <begin position="139"/>
        <end position="142"/>
    </location>
</feature>
<feature type="region of interest" description="G5" evidence="1">
    <location>
        <begin position="177"/>
        <end position="179"/>
    </location>
</feature>
<feature type="binding site" evidence="2">
    <location>
        <begin position="19"/>
        <end position="26"/>
    </location>
    <ligand>
        <name>GTP</name>
        <dbReference type="ChEBI" id="CHEBI:37565"/>
    </ligand>
</feature>
<feature type="binding site" evidence="2">
    <location>
        <position position="26"/>
    </location>
    <ligand>
        <name>Mg(2+)</name>
        <dbReference type="ChEBI" id="CHEBI:18420"/>
    </ligand>
</feature>
<feature type="binding site" evidence="2">
    <location>
        <begin position="84"/>
        <end position="88"/>
    </location>
    <ligand>
        <name>GTP</name>
        <dbReference type="ChEBI" id="CHEBI:37565"/>
    </ligand>
</feature>
<feature type="binding site" evidence="2">
    <location>
        <begin position="139"/>
        <end position="142"/>
    </location>
    <ligand>
        <name>GTP</name>
        <dbReference type="ChEBI" id="CHEBI:37565"/>
    </ligand>
</feature>
<dbReference type="EC" id="3.6.5.3" evidence="2"/>
<dbReference type="EMBL" id="CP000829">
    <property type="protein sequence ID" value="ACI60843.1"/>
    <property type="molecule type" value="Genomic_DNA"/>
</dbReference>
<dbReference type="SMR" id="B5XKI1"/>
<dbReference type="KEGG" id="soz:Spy49_0515"/>
<dbReference type="HOGENOM" id="CLU_007265_0_1_9"/>
<dbReference type="Proteomes" id="UP000001039">
    <property type="component" value="Chromosome"/>
</dbReference>
<dbReference type="GO" id="GO:0005829">
    <property type="term" value="C:cytosol"/>
    <property type="evidence" value="ECO:0007669"/>
    <property type="project" value="TreeGrafter"/>
</dbReference>
<dbReference type="GO" id="GO:0005525">
    <property type="term" value="F:GTP binding"/>
    <property type="evidence" value="ECO:0007669"/>
    <property type="project" value="UniProtKB-UniRule"/>
</dbReference>
<dbReference type="GO" id="GO:0003924">
    <property type="term" value="F:GTPase activity"/>
    <property type="evidence" value="ECO:0007669"/>
    <property type="project" value="InterPro"/>
</dbReference>
<dbReference type="GO" id="GO:0003746">
    <property type="term" value="F:translation elongation factor activity"/>
    <property type="evidence" value="ECO:0007669"/>
    <property type="project" value="UniProtKB-UniRule"/>
</dbReference>
<dbReference type="CDD" id="cd01884">
    <property type="entry name" value="EF_Tu"/>
    <property type="match status" value="1"/>
</dbReference>
<dbReference type="CDD" id="cd03697">
    <property type="entry name" value="EFTU_II"/>
    <property type="match status" value="1"/>
</dbReference>
<dbReference type="CDD" id="cd03707">
    <property type="entry name" value="EFTU_III"/>
    <property type="match status" value="1"/>
</dbReference>
<dbReference type="FunFam" id="2.40.30.10:FF:000001">
    <property type="entry name" value="Elongation factor Tu"/>
    <property type="match status" value="1"/>
</dbReference>
<dbReference type="FunFam" id="3.40.50.300:FF:000003">
    <property type="entry name" value="Elongation factor Tu"/>
    <property type="match status" value="1"/>
</dbReference>
<dbReference type="Gene3D" id="3.40.50.300">
    <property type="entry name" value="P-loop containing nucleotide triphosphate hydrolases"/>
    <property type="match status" value="1"/>
</dbReference>
<dbReference type="Gene3D" id="2.40.30.10">
    <property type="entry name" value="Translation factors"/>
    <property type="match status" value="2"/>
</dbReference>
<dbReference type="HAMAP" id="MF_00118_B">
    <property type="entry name" value="EF_Tu_B"/>
    <property type="match status" value="1"/>
</dbReference>
<dbReference type="InterPro" id="IPR041709">
    <property type="entry name" value="EF-Tu_GTP-bd"/>
</dbReference>
<dbReference type="InterPro" id="IPR050055">
    <property type="entry name" value="EF-Tu_GTPase"/>
</dbReference>
<dbReference type="InterPro" id="IPR004161">
    <property type="entry name" value="EFTu-like_2"/>
</dbReference>
<dbReference type="InterPro" id="IPR033720">
    <property type="entry name" value="EFTU_2"/>
</dbReference>
<dbReference type="InterPro" id="IPR031157">
    <property type="entry name" value="G_TR_CS"/>
</dbReference>
<dbReference type="InterPro" id="IPR027417">
    <property type="entry name" value="P-loop_NTPase"/>
</dbReference>
<dbReference type="InterPro" id="IPR005225">
    <property type="entry name" value="Small_GTP-bd"/>
</dbReference>
<dbReference type="InterPro" id="IPR000795">
    <property type="entry name" value="T_Tr_GTP-bd_dom"/>
</dbReference>
<dbReference type="InterPro" id="IPR009000">
    <property type="entry name" value="Transl_B-barrel_sf"/>
</dbReference>
<dbReference type="InterPro" id="IPR009001">
    <property type="entry name" value="Transl_elong_EF1A/Init_IF2_C"/>
</dbReference>
<dbReference type="InterPro" id="IPR004541">
    <property type="entry name" value="Transl_elong_EFTu/EF1A_bac/org"/>
</dbReference>
<dbReference type="InterPro" id="IPR004160">
    <property type="entry name" value="Transl_elong_EFTu/EF1A_C"/>
</dbReference>
<dbReference type="NCBIfam" id="TIGR00485">
    <property type="entry name" value="EF-Tu"/>
    <property type="match status" value="1"/>
</dbReference>
<dbReference type="NCBIfam" id="NF000766">
    <property type="entry name" value="PRK00049.1"/>
    <property type="match status" value="1"/>
</dbReference>
<dbReference type="NCBIfam" id="NF009372">
    <property type="entry name" value="PRK12735.1"/>
    <property type="match status" value="1"/>
</dbReference>
<dbReference type="NCBIfam" id="NF009373">
    <property type="entry name" value="PRK12736.1"/>
    <property type="match status" value="1"/>
</dbReference>
<dbReference type="NCBIfam" id="TIGR00231">
    <property type="entry name" value="small_GTP"/>
    <property type="match status" value="1"/>
</dbReference>
<dbReference type="PANTHER" id="PTHR43721:SF22">
    <property type="entry name" value="ELONGATION FACTOR TU, MITOCHONDRIAL"/>
    <property type="match status" value="1"/>
</dbReference>
<dbReference type="PANTHER" id="PTHR43721">
    <property type="entry name" value="ELONGATION FACTOR TU-RELATED"/>
    <property type="match status" value="1"/>
</dbReference>
<dbReference type="Pfam" id="PF00009">
    <property type="entry name" value="GTP_EFTU"/>
    <property type="match status" value="1"/>
</dbReference>
<dbReference type="Pfam" id="PF03144">
    <property type="entry name" value="GTP_EFTU_D2"/>
    <property type="match status" value="1"/>
</dbReference>
<dbReference type="Pfam" id="PF03143">
    <property type="entry name" value="GTP_EFTU_D3"/>
    <property type="match status" value="1"/>
</dbReference>
<dbReference type="PRINTS" id="PR00315">
    <property type="entry name" value="ELONGATNFCT"/>
</dbReference>
<dbReference type="SUPFAM" id="SSF50465">
    <property type="entry name" value="EF-Tu/eEF-1alpha/eIF2-gamma C-terminal domain"/>
    <property type="match status" value="1"/>
</dbReference>
<dbReference type="SUPFAM" id="SSF52540">
    <property type="entry name" value="P-loop containing nucleoside triphosphate hydrolases"/>
    <property type="match status" value="1"/>
</dbReference>
<dbReference type="SUPFAM" id="SSF50447">
    <property type="entry name" value="Translation proteins"/>
    <property type="match status" value="1"/>
</dbReference>
<dbReference type="PROSITE" id="PS00301">
    <property type="entry name" value="G_TR_1"/>
    <property type="match status" value="1"/>
</dbReference>
<dbReference type="PROSITE" id="PS51722">
    <property type="entry name" value="G_TR_2"/>
    <property type="match status" value="1"/>
</dbReference>
<organism>
    <name type="scientific">Streptococcus pyogenes serotype M49 (strain NZ131)</name>
    <dbReference type="NCBI Taxonomy" id="471876"/>
    <lineage>
        <taxon>Bacteria</taxon>
        <taxon>Bacillati</taxon>
        <taxon>Bacillota</taxon>
        <taxon>Bacilli</taxon>
        <taxon>Lactobacillales</taxon>
        <taxon>Streptococcaceae</taxon>
        <taxon>Streptococcus</taxon>
    </lineage>
</organism>
<accession>B5XKI1</accession>
<evidence type="ECO:0000250" key="1"/>
<evidence type="ECO:0000255" key="2">
    <source>
        <dbReference type="HAMAP-Rule" id="MF_00118"/>
    </source>
</evidence>
<gene>
    <name evidence="2" type="primary">tuf</name>
    <name type="ordered locus">Spy49_0515</name>
</gene>
<reference key="1">
    <citation type="journal article" date="2008" name="J. Bacteriol.">
        <title>Genome sequence of a nephritogenic and highly transformable M49 strain of Streptococcus pyogenes.</title>
        <authorList>
            <person name="McShan W.M."/>
            <person name="Ferretti J.J."/>
            <person name="Karasawa T."/>
            <person name="Suvorov A.N."/>
            <person name="Lin S."/>
            <person name="Qin B."/>
            <person name="Jia H."/>
            <person name="Kenton S."/>
            <person name="Najar F."/>
            <person name="Wu H."/>
            <person name="Scott J."/>
            <person name="Roe B.A."/>
            <person name="Savic D.J."/>
        </authorList>
    </citation>
    <scope>NUCLEOTIDE SEQUENCE [LARGE SCALE GENOMIC DNA]</scope>
    <source>
        <strain>NZ131</strain>
    </source>
</reference>
<protein>
    <recommendedName>
        <fullName evidence="2">Elongation factor Tu</fullName>
        <shortName evidence="2">EF-Tu</shortName>
        <ecNumber evidence="2">3.6.5.3</ecNumber>
    </recommendedName>
</protein>
<proteinExistence type="inferred from homology"/>
<name>EFTU_STRPZ</name>
<sequence length="398" mass="43914">MAKEKYDRSKPHVNIGTIGHVDHGKTTLTAAITTVLARRLPTSVNQPKDYASIDAAPEERERGITINTAHVEYETETRHYAHIDAPGHADYVKNMITGAAQMDGAILVVASTDGPMPQTREHILLSRQVGVKHLIVFMNKVDLVDDEELLELVEMEIRDLLSEYDFPGDDLPVIQGSALKALEGDSKYEDIIMELMSTVDEYIPEPERDTDKPLLLPVEDVFSITGRGTVASGRIDRGTVRVNDEIEIVGIKEETKKAVVTGVEMFRKQLDEGLAGDNVGILLRGVQRDEIERGQVIAKPGSINPHTKFKGEVYILSKDEGGRHTPFFNNYRPQFYFRTTDVTGSIELPAGTEMVMPGDNVTINVELIHPIAVEQGTTFSIREGGRTVGSGIVSEIEA</sequence>
<comment type="function">
    <text evidence="2">GTP hydrolase that promotes the GTP-dependent binding of aminoacyl-tRNA to the A-site of ribosomes during protein biosynthesis.</text>
</comment>
<comment type="catalytic activity">
    <reaction evidence="2">
        <text>GTP + H2O = GDP + phosphate + H(+)</text>
        <dbReference type="Rhea" id="RHEA:19669"/>
        <dbReference type="ChEBI" id="CHEBI:15377"/>
        <dbReference type="ChEBI" id="CHEBI:15378"/>
        <dbReference type="ChEBI" id="CHEBI:37565"/>
        <dbReference type="ChEBI" id="CHEBI:43474"/>
        <dbReference type="ChEBI" id="CHEBI:58189"/>
        <dbReference type="EC" id="3.6.5.3"/>
    </reaction>
    <physiologicalReaction direction="left-to-right" evidence="2">
        <dbReference type="Rhea" id="RHEA:19670"/>
    </physiologicalReaction>
</comment>
<comment type="subunit">
    <text evidence="2">Monomer.</text>
</comment>
<comment type="subcellular location">
    <subcellularLocation>
        <location evidence="2">Cytoplasm</location>
    </subcellularLocation>
</comment>
<comment type="similarity">
    <text evidence="2">Belongs to the TRAFAC class translation factor GTPase superfamily. Classic translation factor GTPase family. EF-Tu/EF-1A subfamily.</text>
</comment>
<keyword id="KW-0963">Cytoplasm</keyword>
<keyword id="KW-0251">Elongation factor</keyword>
<keyword id="KW-0342">GTP-binding</keyword>
<keyword id="KW-0378">Hydrolase</keyword>
<keyword id="KW-0460">Magnesium</keyword>
<keyword id="KW-0479">Metal-binding</keyword>
<keyword id="KW-0547">Nucleotide-binding</keyword>
<keyword id="KW-0648">Protein biosynthesis</keyword>